<dbReference type="EC" id="6.1.1.21"/>
<dbReference type="EMBL" id="U38804">
    <property type="protein sequence ID" value="AAC08234.1"/>
    <property type="molecule type" value="Genomic_DNA"/>
</dbReference>
<dbReference type="PIR" id="S73269">
    <property type="entry name" value="S73269"/>
</dbReference>
<dbReference type="RefSeq" id="NP_053958.1">
    <property type="nucleotide sequence ID" value="NC_000925.1"/>
</dbReference>
<dbReference type="SMR" id="P51348"/>
<dbReference type="GeneID" id="809984"/>
<dbReference type="BRENDA" id="6.1.1.21">
    <property type="organism ID" value="7220"/>
</dbReference>
<dbReference type="GO" id="GO:0009507">
    <property type="term" value="C:chloroplast"/>
    <property type="evidence" value="ECO:0007669"/>
    <property type="project" value="UniProtKB-SubCell"/>
</dbReference>
<dbReference type="GO" id="GO:0005524">
    <property type="term" value="F:ATP binding"/>
    <property type="evidence" value="ECO:0007669"/>
    <property type="project" value="UniProtKB-UniRule"/>
</dbReference>
<dbReference type="GO" id="GO:0004821">
    <property type="term" value="F:histidine-tRNA ligase activity"/>
    <property type="evidence" value="ECO:0007669"/>
    <property type="project" value="UniProtKB-UniRule"/>
</dbReference>
<dbReference type="GO" id="GO:0006427">
    <property type="term" value="P:histidyl-tRNA aminoacylation"/>
    <property type="evidence" value="ECO:0007669"/>
    <property type="project" value="UniProtKB-UniRule"/>
</dbReference>
<dbReference type="CDD" id="cd00773">
    <property type="entry name" value="HisRS-like_core"/>
    <property type="match status" value="1"/>
</dbReference>
<dbReference type="CDD" id="cd00859">
    <property type="entry name" value="HisRS_anticodon"/>
    <property type="match status" value="1"/>
</dbReference>
<dbReference type="Gene3D" id="3.40.50.800">
    <property type="entry name" value="Anticodon-binding domain"/>
    <property type="match status" value="1"/>
</dbReference>
<dbReference type="Gene3D" id="3.30.930.10">
    <property type="entry name" value="Bira Bifunctional Protein, Domain 2"/>
    <property type="match status" value="1"/>
</dbReference>
<dbReference type="HAMAP" id="MF_00127">
    <property type="entry name" value="His_tRNA_synth"/>
    <property type="match status" value="1"/>
</dbReference>
<dbReference type="InterPro" id="IPR006195">
    <property type="entry name" value="aa-tRNA-synth_II"/>
</dbReference>
<dbReference type="InterPro" id="IPR045864">
    <property type="entry name" value="aa-tRNA-synth_II/BPL/LPL"/>
</dbReference>
<dbReference type="InterPro" id="IPR004154">
    <property type="entry name" value="Anticodon-bd"/>
</dbReference>
<dbReference type="InterPro" id="IPR036621">
    <property type="entry name" value="Anticodon-bd_dom_sf"/>
</dbReference>
<dbReference type="InterPro" id="IPR015807">
    <property type="entry name" value="His-tRNA-ligase"/>
</dbReference>
<dbReference type="InterPro" id="IPR041715">
    <property type="entry name" value="HisRS-like_core"/>
</dbReference>
<dbReference type="InterPro" id="IPR004516">
    <property type="entry name" value="HisRS/HisZ"/>
</dbReference>
<dbReference type="InterPro" id="IPR033656">
    <property type="entry name" value="HisRS_anticodon"/>
</dbReference>
<dbReference type="NCBIfam" id="TIGR00442">
    <property type="entry name" value="hisS"/>
    <property type="match status" value="1"/>
</dbReference>
<dbReference type="PANTHER" id="PTHR43707:SF1">
    <property type="entry name" value="HISTIDINE--TRNA LIGASE, MITOCHONDRIAL-RELATED"/>
    <property type="match status" value="1"/>
</dbReference>
<dbReference type="PANTHER" id="PTHR43707">
    <property type="entry name" value="HISTIDYL-TRNA SYNTHETASE"/>
    <property type="match status" value="1"/>
</dbReference>
<dbReference type="Pfam" id="PF03129">
    <property type="entry name" value="HGTP_anticodon"/>
    <property type="match status" value="1"/>
</dbReference>
<dbReference type="Pfam" id="PF13393">
    <property type="entry name" value="tRNA-synt_His"/>
    <property type="match status" value="1"/>
</dbReference>
<dbReference type="PIRSF" id="PIRSF001549">
    <property type="entry name" value="His-tRNA_synth"/>
    <property type="match status" value="1"/>
</dbReference>
<dbReference type="SUPFAM" id="SSF52954">
    <property type="entry name" value="Class II aaRS ABD-related"/>
    <property type="match status" value="1"/>
</dbReference>
<dbReference type="SUPFAM" id="SSF55681">
    <property type="entry name" value="Class II aaRS and biotin synthetases"/>
    <property type="match status" value="1"/>
</dbReference>
<dbReference type="PROSITE" id="PS50862">
    <property type="entry name" value="AA_TRNA_LIGASE_II"/>
    <property type="match status" value="1"/>
</dbReference>
<comment type="catalytic activity">
    <reaction>
        <text>tRNA(His) + L-histidine + ATP = L-histidyl-tRNA(His) + AMP + diphosphate + H(+)</text>
        <dbReference type="Rhea" id="RHEA:17313"/>
        <dbReference type="Rhea" id="RHEA-COMP:9665"/>
        <dbReference type="Rhea" id="RHEA-COMP:9689"/>
        <dbReference type="ChEBI" id="CHEBI:15378"/>
        <dbReference type="ChEBI" id="CHEBI:30616"/>
        <dbReference type="ChEBI" id="CHEBI:33019"/>
        <dbReference type="ChEBI" id="CHEBI:57595"/>
        <dbReference type="ChEBI" id="CHEBI:78442"/>
        <dbReference type="ChEBI" id="CHEBI:78527"/>
        <dbReference type="ChEBI" id="CHEBI:456215"/>
        <dbReference type="EC" id="6.1.1.21"/>
    </reaction>
</comment>
<comment type="subcellular location">
    <subcellularLocation>
        <location>Plastid</location>
        <location>Chloroplast</location>
    </subcellularLocation>
</comment>
<comment type="similarity">
    <text evidence="1">Belongs to the class-II aminoacyl-tRNA synthetase family.</text>
</comment>
<proteinExistence type="inferred from homology"/>
<reference key="1">
    <citation type="journal article" date="1995" name="Plant Mol. Biol. Rep.">
        <title>Complete nucleotide sequence of the Porphyra purpurea chloroplast genome.</title>
        <authorList>
            <person name="Reith M.E."/>
            <person name="Munholland J."/>
        </authorList>
    </citation>
    <scope>NUCLEOTIDE SEQUENCE [LARGE SCALE GENOMIC DNA]</scope>
    <source>
        <strain>Avonport</strain>
    </source>
</reference>
<keyword id="KW-0030">Aminoacyl-tRNA synthetase</keyword>
<keyword id="KW-0067">ATP-binding</keyword>
<keyword id="KW-0150">Chloroplast</keyword>
<keyword id="KW-0436">Ligase</keyword>
<keyword id="KW-0547">Nucleotide-binding</keyword>
<keyword id="KW-0934">Plastid</keyword>
<keyword id="KW-0648">Protein biosynthesis</keyword>
<organism>
    <name type="scientific">Porphyra purpurea</name>
    <name type="common">Red seaweed</name>
    <name type="synonym">Ulva purpurea</name>
    <dbReference type="NCBI Taxonomy" id="2787"/>
    <lineage>
        <taxon>Eukaryota</taxon>
        <taxon>Rhodophyta</taxon>
        <taxon>Bangiophyceae</taxon>
        <taxon>Bangiales</taxon>
        <taxon>Bangiaceae</taxon>
        <taxon>Porphyra</taxon>
    </lineage>
</organism>
<evidence type="ECO:0000305" key="1"/>
<sequence>MAKIQAIRGTKDILPDEQLYWQFIHEKVASLLKYANYKEIKTPIFENSDLYDRGIGENTDIVNKEMYRFNDRSNRDITLRPEGTAGVVRAFIENRMDVQNRLQKLWYSGPMFRYERPQSGRQRQFHQLGIEFIGSSDARADAEIIHLAMNIFNDLSVNDLQLDINSIGKAEDRNHYQAKLQEYLEQYYDDLDTDSQNRLSSNPIRILDTKNKYTQTILNDSPRISDFLSLESEKHFDDVCDYLTLLNVPYKINTQLVRGLDYYNDTAFEIKILKSQGQDTLCGGGRYDSLIHQLGGNKTPAVGCAIGLERLLLVAKDNILLPHMSIDCYIVSKGIKARKIGIIITQFLRNQLVKTELDISSSNFGKQLKQAHKKRAIACLILGDNEIQQETITIKWMYTQEQENMSIIEFKNKISYLKKKIAFNKKFNSY</sequence>
<accession>P51348</accession>
<protein>
    <recommendedName>
        <fullName>Histidine--tRNA ligase, chloroplastic</fullName>
        <ecNumber>6.1.1.21</ecNumber>
    </recommendedName>
    <alternativeName>
        <fullName>Histidyl-tRNA synthetase</fullName>
        <shortName>HisRS</shortName>
    </alternativeName>
</protein>
<geneLocation type="chloroplast"/>
<name>SYH_PORPU</name>
<gene>
    <name type="primary">hisS</name>
    <name type="synonym">syh</name>
</gene>
<feature type="chain" id="PRO_0000136331" description="Histidine--tRNA ligase, chloroplastic">
    <location>
        <begin position="1"/>
        <end position="430"/>
    </location>
</feature>